<accession>Q6C8V1</accession>
<protein>
    <recommendedName>
        <fullName evidence="1">Enolase-phosphatase E1</fullName>
        <ecNumber evidence="1">3.1.3.77</ecNumber>
    </recommendedName>
    <alternativeName>
        <fullName evidence="1">2,3-diketo-5-methylthio-1-phosphopentane phosphatase</fullName>
    </alternativeName>
</protein>
<proteinExistence type="inferred from homology"/>
<keyword id="KW-0028">Amino-acid biosynthesis</keyword>
<keyword id="KW-0963">Cytoplasm</keyword>
<keyword id="KW-0378">Hydrolase</keyword>
<keyword id="KW-0460">Magnesium</keyword>
<keyword id="KW-0479">Metal-binding</keyword>
<keyword id="KW-0486">Methionine biosynthesis</keyword>
<keyword id="KW-0539">Nucleus</keyword>
<keyword id="KW-1185">Reference proteome</keyword>
<gene>
    <name evidence="1" type="primary">UTR4</name>
    <name type="ordered locus">YALI0D16797g</name>
</gene>
<reference key="1">
    <citation type="journal article" date="2004" name="Nature">
        <title>Genome evolution in yeasts.</title>
        <authorList>
            <person name="Dujon B."/>
            <person name="Sherman D."/>
            <person name="Fischer G."/>
            <person name="Durrens P."/>
            <person name="Casaregola S."/>
            <person name="Lafontaine I."/>
            <person name="de Montigny J."/>
            <person name="Marck C."/>
            <person name="Neuveglise C."/>
            <person name="Talla E."/>
            <person name="Goffard N."/>
            <person name="Frangeul L."/>
            <person name="Aigle M."/>
            <person name="Anthouard V."/>
            <person name="Babour A."/>
            <person name="Barbe V."/>
            <person name="Barnay S."/>
            <person name="Blanchin S."/>
            <person name="Beckerich J.-M."/>
            <person name="Beyne E."/>
            <person name="Bleykasten C."/>
            <person name="Boisrame A."/>
            <person name="Boyer J."/>
            <person name="Cattolico L."/>
            <person name="Confanioleri F."/>
            <person name="de Daruvar A."/>
            <person name="Despons L."/>
            <person name="Fabre E."/>
            <person name="Fairhead C."/>
            <person name="Ferry-Dumazet H."/>
            <person name="Groppi A."/>
            <person name="Hantraye F."/>
            <person name="Hennequin C."/>
            <person name="Jauniaux N."/>
            <person name="Joyet P."/>
            <person name="Kachouri R."/>
            <person name="Kerrest A."/>
            <person name="Koszul R."/>
            <person name="Lemaire M."/>
            <person name="Lesur I."/>
            <person name="Ma L."/>
            <person name="Muller H."/>
            <person name="Nicaud J.-M."/>
            <person name="Nikolski M."/>
            <person name="Oztas S."/>
            <person name="Ozier-Kalogeropoulos O."/>
            <person name="Pellenz S."/>
            <person name="Potier S."/>
            <person name="Richard G.-F."/>
            <person name="Straub M.-L."/>
            <person name="Suleau A."/>
            <person name="Swennen D."/>
            <person name="Tekaia F."/>
            <person name="Wesolowski-Louvel M."/>
            <person name="Westhof E."/>
            <person name="Wirth B."/>
            <person name="Zeniou-Meyer M."/>
            <person name="Zivanovic Y."/>
            <person name="Bolotin-Fukuhara M."/>
            <person name="Thierry A."/>
            <person name="Bouchier C."/>
            <person name="Caudron B."/>
            <person name="Scarpelli C."/>
            <person name="Gaillardin C."/>
            <person name="Weissenbach J."/>
            <person name="Wincker P."/>
            <person name="Souciet J.-L."/>
        </authorList>
    </citation>
    <scope>NUCLEOTIDE SEQUENCE [LARGE SCALE GENOMIC DNA]</scope>
    <source>
        <strain>CLIB 122 / E 150</strain>
    </source>
</reference>
<dbReference type="EC" id="3.1.3.77" evidence="1"/>
<dbReference type="EMBL" id="CR382130">
    <property type="protein sequence ID" value="CAG81102.1"/>
    <property type="molecule type" value="Genomic_DNA"/>
</dbReference>
<dbReference type="RefSeq" id="XP_502911.1">
    <property type="nucleotide sequence ID" value="XM_502911.1"/>
</dbReference>
<dbReference type="SMR" id="Q6C8V1"/>
<dbReference type="FunCoup" id="Q6C8V1">
    <property type="interactions" value="651"/>
</dbReference>
<dbReference type="STRING" id="284591.Q6C8V1"/>
<dbReference type="EnsemblFungi" id="CAG81102">
    <property type="protein sequence ID" value="CAG81102"/>
    <property type="gene ID" value="YALI0_D16797g"/>
</dbReference>
<dbReference type="KEGG" id="yli:2910210"/>
<dbReference type="VEuPathDB" id="FungiDB:YALI0_D16797g"/>
<dbReference type="HOGENOM" id="CLU_023273_1_1_1"/>
<dbReference type="InParanoid" id="Q6C8V1"/>
<dbReference type="OMA" id="LQGMVWE"/>
<dbReference type="OrthoDB" id="86472at4891"/>
<dbReference type="UniPathway" id="UPA00904">
    <property type="reaction ID" value="UER00876"/>
</dbReference>
<dbReference type="UniPathway" id="UPA00904">
    <property type="reaction ID" value="UER00877"/>
</dbReference>
<dbReference type="Proteomes" id="UP000001300">
    <property type="component" value="Chromosome D"/>
</dbReference>
<dbReference type="GO" id="GO:0005737">
    <property type="term" value="C:cytoplasm"/>
    <property type="evidence" value="ECO:0007669"/>
    <property type="project" value="UniProtKB-SubCell"/>
</dbReference>
<dbReference type="GO" id="GO:0005634">
    <property type="term" value="C:nucleus"/>
    <property type="evidence" value="ECO:0007669"/>
    <property type="project" value="UniProtKB-SubCell"/>
</dbReference>
<dbReference type="GO" id="GO:0043874">
    <property type="term" value="F:acireductone synthase activity"/>
    <property type="evidence" value="ECO:0000318"/>
    <property type="project" value="GO_Central"/>
</dbReference>
<dbReference type="GO" id="GO:0000287">
    <property type="term" value="F:magnesium ion binding"/>
    <property type="evidence" value="ECO:0007669"/>
    <property type="project" value="UniProtKB-UniRule"/>
</dbReference>
<dbReference type="GO" id="GO:0019509">
    <property type="term" value="P:L-methionine salvage from methylthioadenosine"/>
    <property type="evidence" value="ECO:0000318"/>
    <property type="project" value="GO_Central"/>
</dbReference>
<dbReference type="CDD" id="cd01629">
    <property type="entry name" value="HAD_EP"/>
    <property type="match status" value="1"/>
</dbReference>
<dbReference type="FunFam" id="1.10.720.60:FF:000007">
    <property type="entry name" value="Enolase-phosphatase E1"/>
    <property type="match status" value="1"/>
</dbReference>
<dbReference type="FunFam" id="3.40.50.1000:FF:000079">
    <property type="entry name" value="Enolase-phosphatase E1"/>
    <property type="match status" value="1"/>
</dbReference>
<dbReference type="Gene3D" id="1.10.720.60">
    <property type="match status" value="1"/>
</dbReference>
<dbReference type="Gene3D" id="3.40.50.1000">
    <property type="entry name" value="HAD superfamily/HAD-like"/>
    <property type="match status" value="1"/>
</dbReference>
<dbReference type="HAMAP" id="MF_03117">
    <property type="entry name" value="Salvage_MtnC_euk"/>
    <property type="match status" value="1"/>
</dbReference>
<dbReference type="InterPro" id="IPR023943">
    <property type="entry name" value="Enolase-ppase_E1"/>
</dbReference>
<dbReference type="InterPro" id="IPR027511">
    <property type="entry name" value="ENOPH1_eukaryotes"/>
</dbReference>
<dbReference type="InterPro" id="IPR036412">
    <property type="entry name" value="HAD-like_sf"/>
</dbReference>
<dbReference type="InterPro" id="IPR006439">
    <property type="entry name" value="HAD-SF_hydro_IA"/>
</dbReference>
<dbReference type="InterPro" id="IPR023214">
    <property type="entry name" value="HAD_sf"/>
</dbReference>
<dbReference type="NCBIfam" id="TIGR01691">
    <property type="entry name" value="enolase-ppase"/>
    <property type="match status" value="1"/>
</dbReference>
<dbReference type="NCBIfam" id="TIGR01549">
    <property type="entry name" value="HAD-SF-IA-v1"/>
    <property type="match status" value="1"/>
</dbReference>
<dbReference type="PANTHER" id="PTHR20371">
    <property type="entry name" value="ENOLASE-PHOSPHATASE E1"/>
    <property type="match status" value="1"/>
</dbReference>
<dbReference type="PANTHER" id="PTHR20371:SF1">
    <property type="entry name" value="ENOLASE-PHOSPHATASE E1"/>
    <property type="match status" value="1"/>
</dbReference>
<dbReference type="Pfam" id="PF00702">
    <property type="entry name" value="Hydrolase"/>
    <property type="match status" value="1"/>
</dbReference>
<dbReference type="SFLD" id="SFLDG01133">
    <property type="entry name" value="C1.5.4:_Enolase-phosphatase_Li"/>
    <property type="match status" value="1"/>
</dbReference>
<dbReference type="SFLD" id="SFLDS00003">
    <property type="entry name" value="Haloacid_Dehalogenase"/>
    <property type="match status" value="1"/>
</dbReference>
<dbReference type="SUPFAM" id="SSF56784">
    <property type="entry name" value="HAD-like"/>
    <property type="match status" value="1"/>
</dbReference>
<sequence length="233" mass="25744">MATLLDIEGTVCSISFVHDILFPYALEKLPQLLKNEQFPIKPGGNQTSDLTPYLESFPEEYKQSAQALEDHVIDLTEKNVKAPYLKALQGYIWKSGYQSGEIKAPLYPDAVDYMKRVVDGGNKVFIYSSGSVPAQKLLFGYSSAGDLTPLISDYFDTVNAGPKMEAASYTTILKAIGFEADRVLFLSDNVREIEAAKKAGLRAYVAERPGNAKLTPQEKEDNVIKTSFEGIEI</sequence>
<evidence type="ECO:0000255" key="1">
    <source>
        <dbReference type="HAMAP-Rule" id="MF_03117"/>
    </source>
</evidence>
<organism>
    <name type="scientific">Yarrowia lipolytica (strain CLIB 122 / E 150)</name>
    <name type="common">Yeast</name>
    <name type="synonym">Candida lipolytica</name>
    <dbReference type="NCBI Taxonomy" id="284591"/>
    <lineage>
        <taxon>Eukaryota</taxon>
        <taxon>Fungi</taxon>
        <taxon>Dikarya</taxon>
        <taxon>Ascomycota</taxon>
        <taxon>Saccharomycotina</taxon>
        <taxon>Dipodascomycetes</taxon>
        <taxon>Dipodascales</taxon>
        <taxon>Dipodascales incertae sedis</taxon>
        <taxon>Yarrowia</taxon>
    </lineage>
</organism>
<feature type="chain" id="PRO_0000394016" description="Enolase-phosphatase E1">
    <location>
        <begin position="1"/>
        <end position="233"/>
    </location>
</feature>
<feature type="binding site" evidence="1">
    <location>
        <position position="6"/>
    </location>
    <ligand>
        <name>Mg(2+)</name>
        <dbReference type="ChEBI" id="CHEBI:18420"/>
    </ligand>
</feature>
<feature type="binding site" evidence="1">
    <location>
        <position position="8"/>
    </location>
    <ligand>
        <name>Mg(2+)</name>
        <dbReference type="ChEBI" id="CHEBI:18420"/>
    </ligand>
</feature>
<feature type="binding site" evidence="1">
    <location>
        <begin position="128"/>
        <end position="129"/>
    </location>
    <ligand>
        <name>substrate</name>
    </ligand>
</feature>
<feature type="binding site" evidence="1">
    <location>
        <position position="163"/>
    </location>
    <ligand>
        <name>substrate</name>
    </ligand>
</feature>
<feature type="binding site" evidence="1">
    <location>
        <position position="188"/>
    </location>
    <ligand>
        <name>Mg(2+)</name>
        <dbReference type="ChEBI" id="CHEBI:18420"/>
    </ligand>
</feature>
<comment type="function">
    <text evidence="1">Bifunctional enzyme that catalyzes the enolization of 2,3-diketo-5-methylthiopentyl-1-phosphate (DK-MTP-1-P) into the intermediate 2-hydroxy-3-keto-5-methylthiopentenyl-1-phosphate (HK-MTPenyl-1-P), which is then dephosphorylated to form the acireductone 1,2-dihydroxy-3-keto-5-methylthiopentene (DHK-MTPene).</text>
</comment>
<comment type="catalytic activity">
    <reaction evidence="1">
        <text>5-methylsulfanyl-2,3-dioxopentyl phosphate + H2O = 1,2-dihydroxy-5-(methylsulfanyl)pent-1-en-3-one + phosphate</text>
        <dbReference type="Rhea" id="RHEA:21700"/>
        <dbReference type="ChEBI" id="CHEBI:15377"/>
        <dbReference type="ChEBI" id="CHEBI:43474"/>
        <dbReference type="ChEBI" id="CHEBI:49252"/>
        <dbReference type="ChEBI" id="CHEBI:58828"/>
        <dbReference type="EC" id="3.1.3.77"/>
    </reaction>
</comment>
<comment type="cofactor">
    <cofactor evidence="1">
        <name>Mg(2+)</name>
        <dbReference type="ChEBI" id="CHEBI:18420"/>
    </cofactor>
    <text evidence="1">Binds 1 Mg(2+) ion per subunit.</text>
</comment>
<comment type="pathway">
    <text evidence="1">Amino-acid biosynthesis; L-methionine biosynthesis via salvage pathway; L-methionine from S-methyl-5-thio-alpha-D-ribose 1-phosphate: step 3/6.</text>
</comment>
<comment type="pathway">
    <text evidence="1">Amino-acid biosynthesis; L-methionine biosynthesis via salvage pathway; L-methionine from S-methyl-5-thio-alpha-D-ribose 1-phosphate: step 4/6.</text>
</comment>
<comment type="subunit">
    <text evidence="1">Monomer.</text>
</comment>
<comment type="subcellular location">
    <subcellularLocation>
        <location evidence="1">Cytoplasm</location>
    </subcellularLocation>
    <subcellularLocation>
        <location evidence="1">Nucleus</location>
    </subcellularLocation>
</comment>
<comment type="similarity">
    <text evidence="1">Belongs to the HAD-like hydrolase superfamily. MasA/MtnC family.</text>
</comment>
<name>ENOPH_YARLI</name>